<reference key="1">
    <citation type="journal article" date="1999" name="Nature">
        <title>Sequence and analysis of chromosome 4 of the plant Arabidopsis thaliana.</title>
        <authorList>
            <person name="Mayer K.F.X."/>
            <person name="Schueller C."/>
            <person name="Wambutt R."/>
            <person name="Murphy G."/>
            <person name="Volckaert G."/>
            <person name="Pohl T."/>
            <person name="Duesterhoeft A."/>
            <person name="Stiekema W."/>
            <person name="Entian K.-D."/>
            <person name="Terryn N."/>
            <person name="Harris B."/>
            <person name="Ansorge W."/>
            <person name="Brandt P."/>
            <person name="Grivell L.A."/>
            <person name="Rieger M."/>
            <person name="Weichselgartner M."/>
            <person name="de Simone V."/>
            <person name="Obermaier B."/>
            <person name="Mache R."/>
            <person name="Mueller M."/>
            <person name="Kreis M."/>
            <person name="Delseny M."/>
            <person name="Puigdomenech P."/>
            <person name="Watson M."/>
            <person name="Schmidtheini T."/>
            <person name="Reichert B."/>
            <person name="Portetelle D."/>
            <person name="Perez-Alonso M."/>
            <person name="Boutry M."/>
            <person name="Bancroft I."/>
            <person name="Vos P."/>
            <person name="Hoheisel J."/>
            <person name="Zimmermann W."/>
            <person name="Wedler H."/>
            <person name="Ridley P."/>
            <person name="Langham S.-A."/>
            <person name="McCullagh B."/>
            <person name="Bilham L."/>
            <person name="Robben J."/>
            <person name="van der Schueren J."/>
            <person name="Grymonprez B."/>
            <person name="Chuang Y.-J."/>
            <person name="Vandenbussche F."/>
            <person name="Braeken M."/>
            <person name="Weltjens I."/>
            <person name="Voet M."/>
            <person name="Bastiaens I."/>
            <person name="Aert R."/>
            <person name="Defoor E."/>
            <person name="Weitzenegger T."/>
            <person name="Bothe G."/>
            <person name="Ramsperger U."/>
            <person name="Hilbert H."/>
            <person name="Braun M."/>
            <person name="Holzer E."/>
            <person name="Brandt A."/>
            <person name="Peters S."/>
            <person name="van Staveren M."/>
            <person name="Dirkse W."/>
            <person name="Mooijman P."/>
            <person name="Klein Lankhorst R."/>
            <person name="Rose M."/>
            <person name="Hauf J."/>
            <person name="Koetter P."/>
            <person name="Berneiser S."/>
            <person name="Hempel S."/>
            <person name="Feldpausch M."/>
            <person name="Lamberth S."/>
            <person name="Van den Daele H."/>
            <person name="De Keyser A."/>
            <person name="Buysshaert C."/>
            <person name="Gielen J."/>
            <person name="Villarroel R."/>
            <person name="De Clercq R."/>
            <person name="van Montagu M."/>
            <person name="Rogers J."/>
            <person name="Cronin A."/>
            <person name="Quail M.A."/>
            <person name="Bray-Allen S."/>
            <person name="Clark L."/>
            <person name="Doggett J."/>
            <person name="Hall S."/>
            <person name="Kay M."/>
            <person name="Lennard N."/>
            <person name="McLay K."/>
            <person name="Mayes R."/>
            <person name="Pettett A."/>
            <person name="Rajandream M.A."/>
            <person name="Lyne M."/>
            <person name="Benes V."/>
            <person name="Rechmann S."/>
            <person name="Borkova D."/>
            <person name="Bloecker H."/>
            <person name="Scharfe M."/>
            <person name="Grimm M."/>
            <person name="Loehnert T.-H."/>
            <person name="Dose S."/>
            <person name="de Haan M."/>
            <person name="Maarse A.C."/>
            <person name="Schaefer M."/>
            <person name="Mueller-Auer S."/>
            <person name="Gabel C."/>
            <person name="Fuchs M."/>
            <person name="Fartmann B."/>
            <person name="Granderath K."/>
            <person name="Dauner D."/>
            <person name="Herzl A."/>
            <person name="Neumann S."/>
            <person name="Argiriou A."/>
            <person name="Vitale D."/>
            <person name="Liguori R."/>
            <person name="Piravandi E."/>
            <person name="Massenet O."/>
            <person name="Quigley F."/>
            <person name="Clabauld G."/>
            <person name="Muendlein A."/>
            <person name="Felber R."/>
            <person name="Schnabl S."/>
            <person name="Hiller R."/>
            <person name="Schmidt W."/>
            <person name="Lecharny A."/>
            <person name="Aubourg S."/>
            <person name="Chefdor F."/>
            <person name="Cooke R."/>
            <person name="Berger C."/>
            <person name="Monfort A."/>
            <person name="Casacuberta E."/>
            <person name="Gibbons T."/>
            <person name="Weber N."/>
            <person name="Vandenbol M."/>
            <person name="Bargues M."/>
            <person name="Terol J."/>
            <person name="Torres A."/>
            <person name="Perez-Perez A."/>
            <person name="Purnelle B."/>
            <person name="Bent E."/>
            <person name="Johnson S."/>
            <person name="Tacon D."/>
            <person name="Jesse T."/>
            <person name="Heijnen L."/>
            <person name="Schwarz S."/>
            <person name="Scholler P."/>
            <person name="Heber S."/>
            <person name="Francs P."/>
            <person name="Bielke C."/>
            <person name="Frishman D."/>
            <person name="Haase D."/>
            <person name="Lemcke K."/>
            <person name="Mewes H.-W."/>
            <person name="Stocker S."/>
            <person name="Zaccaria P."/>
            <person name="Bevan M."/>
            <person name="Wilson R.K."/>
            <person name="de la Bastide M."/>
            <person name="Habermann K."/>
            <person name="Parnell L."/>
            <person name="Dedhia N."/>
            <person name="Gnoj L."/>
            <person name="Schutz K."/>
            <person name="Huang E."/>
            <person name="Spiegel L."/>
            <person name="Sekhon M."/>
            <person name="Murray J."/>
            <person name="Sheet P."/>
            <person name="Cordes M."/>
            <person name="Abu-Threideh J."/>
            <person name="Stoneking T."/>
            <person name="Kalicki J."/>
            <person name="Graves T."/>
            <person name="Harmon G."/>
            <person name="Edwards J."/>
            <person name="Latreille P."/>
            <person name="Courtney L."/>
            <person name="Cloud J."/>
            <person name="Abbott A."/>
            <person name="Scott K."/>
            <person name="Johnson D."/>
            <person name="Minx P."/>
            <person name="Bentley D."/>
            <person name="Fulton B."/>
            <person name="Miller N."/>
            <person name="Greco T."/>
            <person name="Kemp K."/>
            <person name="Kramer J."/>
            <person name="Fulton L."/>
            <person name="Mardis E."/>
            <person name="Dante M."/>
            <person name="Pepin K."/>
            <person name="Hillier L.W."/>
            <person name="Nelson J."/>
            <person name="Spieth J."/>
            <person name="Ryan E."/>
            <person name="Andrews S."/>
            <person name="Geisel C."/>
            <person name="Layman D."/>
            <person name="Du H."/>
            <person name="Ali J."/>
            <person name="Berghoff A."/>
            <person name="Jones K."/>
            <person name="Drone K."/>
            <person name="Cotton M."/>
            <person name="Joshu C."/>
            <person name="Antonoiu B."/>
            <person name="Zidanic M."/>
            <person name="Strong C."/>
            <person name="Sun H."/>
            <person name="Lamar B."/>
            <person name="Yordan C."/>
            <person name="Ma P."/>
            <person name="Zhong J."/>
            <person name="Preston R."/>
            <person name="Vil D."/>
            <person name="Shekher M."/>
            <person name="Matero A."/>
            <person name="Shah R."/>
            <person name="Swaby I.K."/>
            <person name="O'Shaughnessy A."/>
            <person name="Rodriguez M."/>
            <person name="Hoffman J."/>
            <person name="Till S."/>
            <person name="Granat S."/>
            <person name="Shohdy N."/>
            <person name="Hasegawa A."/>
            <person name="Hameed A."/>
            <person name="Lodhi M."/>
            <person name="Johnson A."/>
            <person name="Chen E."/>
            <person name="Marra M.A."/>
            <person name="Martienssen R."/>
            <person name="McCombie W.R."/>
        </authorList>
    </citation>
    <scope>NUCLEOTIDE SEQUENCE [LARGE SCALE GENOMIC DNA]</scope>
    <source>
        <strain>cv. Columbia</strain>
    </source>
</reference>
<reference key="2">
    <citation type="journal article" date="2017" name="Plant J.">
        <title>Araport11: a complete reannotation of the Arabidopsis thaliana reference genome.</title>
        <authorList>
            <person name="Cheng C.Y."/>
            <person name="Krishnakumar V."/>
            <person name="Chan A.P."/>
            <person name="Thibaud-Nissen F."/>
            <person name="Schobel S."/>
            <person name="Town C.D."/>
        </authorList>
    </citation>
    <scope>GENOME REANNOTATION</scope>
    <source>
        <strain>cv. Columbia</strain>
    </source>
</reference>
<reference key="3">
    <citation type="journal article" date="2003" name="Science">
        <title>Empirical analysis of transcriptional activity in the Arabidopsis genome.</title>
        <authorList>
            <person name="Yamada K."/>
            <person name="Lim J."/>
            <person name="Dale J.M."/>
            <person name="Chen H."/>
            <person name="Shinn P."/>
            <person name="Palm C.J."/>
            <person name="Southwick A.M."/>
            <person name="Wu H.C."/>
            <person name="Kim C.J."/>
            <person name="Nguyen M."/>
            <person name="Pham P.K."/>
            <person name="Cheuk R.F."/>
            <person name="Karlin-Newmann G."/>
            <person name="Liu S.X."/>
            <person name="Lam B."/>
            <person name="Sakano H."/>
            <person name="Wu T."/>
            <person name="Yu G."/>
            <person name="Miranda M."/>
            <person name="Quach H.L."/>
            <person name="Tripp M."/>
            <person name="Chang C.H."/>
            <person name="Lee J.M."/>
            <person name="Toriumi M.J."/>
            <person name="Chan M.M."/>
            <person name="Tang C.C."/>
            <person name="Onodera C.S."/>
            <person name="Deng J.M."/>
            <person name="Akiyama K."/>
            <person name="Ansari Y."/>
            <person name="Arakawa T."/>
            <person name="Banh J."/>
            <person name="Banno F."/>
            <person name="Bowser L."/>
            <person name="Brooks S.Y."/>
            <person name="Carninci P."/>
            <person name="Chao Q."/>
            <person name="Choy N."/>
            <person name="Enju A."/>
            <person name="Goldsmith A.D."/>
            <person name="Gurjal M."/>
            <person name="Hansen N.F."/>
            <person name="Hayashizaki Y."/>
            <person name="Johnson-Hopson C."/>
            <person name="Hsuan V.W."/>
            <person name="Iida K."/>
            <person name="Karnes M."/>
            <person name="Khan S."/>
            <person name="Koesema E."/>
            <person name="Ishida J."/>
            <person name="Jiang P.X."/>
            <person name="Jones T."/>
            <person name="Kawai J."/>
            <person name="Kamiya A."/>
            <person name="Meyers C."/>
            <person name="Nakajima M."/>
            <person name="Narusaka M."/>
            <person name="Seki M."/>
            <person name="Sakurai T."/>
            <person name="Satou M."/>
            <person name="Tamse R."/>
            <person name="Vaysberg M."/>
            <person name="Wallender E.K."/>
            <person name="Wong C."/>
            <person name="Yamamura Y."/>
            <person name="Yuan S."/>
            <person name="Shinozaki K."/>
            <person name="Davis R.W."/>
            <person name="Theologis A."/>
            <person name="Ecker J.R."/>
        </authorList>
    </citation>
    <scope>NUCLEOTIDE SEQUENCE [LARGE SCALE MRNA] (ISOFORM 1)</scope>
    <source>
        <strain>cv. Columbia</strain>
    </source>
</reference>
<reference key="4">
    <citation type="submission" date="2004-09" db="EMBL/GenBank/DDBJ databases">
        <title>Large-scale analysis of RIKEN Arabidopsis full-length (RAFL) cDNAs.</title>
        <authorList>
            <person name="Totoki Y."/>
            <person name="Seki M."/>
            <person name="Ishida J."/>
            <person name="Nakajima M."/>
            <person name="Enju A."/>
            <person name="Kamiya A."/>
            <person name="Narusaka M."/>
            <person name="Shin-i T."/>
            <person name="Nakagawa M."/>
            <person name="Sakamoto N."/>
            <person name="Oishi K."/>
            <person name="Kohara Y."/>
            <person name="Kobayashi M."/>
            <person name="Toyoda A."/>
            <person name="Sakaki Y."/>
            <person name="Sakurai T."/>
            <person name="Iida K."/>
            <person name="Akiyama K."/>
            <person name="Satou M."/>
            <person name="Toyoda T."/>
            <person name="Konagaya A."/>
            <person name="Carninci P."/>
            <person name="Kawai J."/>
            <person name="Hayashizaki Y."/>
            <person name="Shinozaki K."/>
        </authorList>
    </citation>
    <scope>NUCLEOTIDE SEQUENCE [LARGE SCALE MRNA] (ISOFORMS 1 AND 2)</scope>
    <source>
        <strain>cv. Columbia</strain>
    </source>
</reference>
<reference key="5">
    <citation type="submission" date="2002-03" db="EMBL/GenBank/DDBJ databases">
        <title>Full-length cDNA from Arabidopsis thaliana.</title>
        <authorList>
            <person name="Brover V.V."/>
            <person name="Troukhan M.E."/>
            <person name="Alexandrov N.A."/>
            <person name="Lu Y.-P."/>
            <person name="Flavell R.B."/>
            <person name="Feldmann K.A."/>
        </authorList>
    </citation>
    <scope>NUCLEOTIDE SEQUENCE [LARGE SCALE MRNA] (ISOFORM 1)</scope>
</reference>
<reference key="6">
    <citation type="journal article" date="2019" name="Plant Cell Physiol.">
        <title>DAY-LENGTH-DEPENDENT DELAYED-GREENING1, the Arabidopsis homolog of the cyanobacterial H+-extrusion protein, is essential for chloroplast pH regulation and optimization of non-photochemical quenching.</title>
        <authorList>
            <person name="Harada K."/>
            <person name="Arizono T."/>
            <person name="Sato R."/>
            <person name="Trinh M.D.L."/>
            <person name="Hashimoto A."/>
            <person name="Kono M."/>
            <person name="Tsujii M."/>
            <person name="Uozumi N."/>
            <person name="Takaichi S."/>
            <person name="Masuda S."/>
        </authorList>
    </citation>
    <scope>FUNCTION</scope>
    <scope>DISRUPTION PHENOTYPE</scope>
    <scope>TRANSPORTER ACTIVITY</scope>
    <scope>SUBCELLULAR LOCATION</scope>
    <source>
        <strain>cv. Columbia</strain>
    </source>
</reference>
<reference key="7">
    <citation type="journal article" date="2023" name="FEBS Lett.">
        <title>Arabidopsis mutants lacking DLDG1 and non-photochemical quenching-related proteins reveal the regulatory role of DLDG1 in chloroplast pH homeostasis.</title>
        <authorList>
            <person name="Suzuki K."/>
            <person name="Masuda S."/>
        </authorList>
    </citation>
    <scope>FUNCTION</scope>
    <scope>DISRUPTION PHENOTYPE</scope>
    <source>
        <strain>cv. Columbia</strain>
    </source>
</reference>
<dbReference type="EMBL" id="AL022198">
    <property type="protein sequence ID" value="CAA18189.1"/>
    <property type="status" value="ALT_SEQ"/>
    <property type="molecule type" value="Genomic_DNA"/>
</dbReference>
<dbReference type="EMBL" id="AL161578">
    <property type="protein sequence ID" value="CAB79822.1"/>
    <property type="status" value="ALT_SEQ"/>
    <property type="molecule type" value="Genomic_DNA"/>
</dbReference>
<dbReference type="EMBL" id="CP002687">
    <property type="protein sequence ID" value="AEE85850.1"/>
    <property type="molecule type" value="Genomic_DNA"/>
</dbReference>
<dbReference type="EMBL" id="AY080750">
    <property type="protein sequence ID" value="AAL85996.1"/>
    <property type="molecule type" value="mRNA"/>
</dbReference>
<dbReference type="EMBL" id="BT006145">
    <property type="protein sequence ID" value="AAP04130.1"/>
    <property type="molecule type" value="mRNA"/>
</dbReference>
<dbReference type="EMBL" id="AK175320">
    <property type="protein sequence ID" value="BAD43083.1"/>
    <property type="molecule type" value="mRNA"/>
</dbReference>
<dbReference type="EMBL" id="AK175421">
    <property type="protein sequence ID" value="BAD43184.1"/>
    <property type="molecule type" value="mRNA"/>
</dbReference>
<dbReference type="EMBL" id="AK175472">
    <property type="protein sequence ID" value="BAD43235.1"/>
    <property type="molecule type" value="mRNA"/>
</dbReference>
<dbReference type="EMBL" id="AK175545">
    <property type="protein sequence ID" value="BAD43308.1"/>
    <property type="molecule type" value="mRNA"/>
</dbReference>
<dbReference type="EMBL" id="AK176222">
    <property type="protein sequence ID" value="BAD43985.1"/>
    <property type="molecule type" value="mRNA"/>
</dbReference>
<dbReference type="EMBL" id="AK176499">
    <property type="protein sequence ID" value="BAD44262.1"/>
    <property type="molecule type" value="mRNA"/>
</dbReference>
<dbReference type="EMBL" id="AK176540">
    <property type="protein sequence ID" value="BAD44303.1"/>
    <property type="molecule type" value="mRNA"/>
</dbReference>
<dbReference type="EMBL" id="AK176545">
    <property type="protein sequence ID" value="BAD44308.1"/>
    <property type="molecule type" value="mRNA"/>
</dbReference>
<dbReference type="EMBL" id="AK176554">
    <property type="protein sequence ID" value="BAD44317.1"/>
    <property type="molecule type" value="mRNA"/>
</dbReference>
<dbReference type="EMBL" id="AK176739">
    <property type="protein sequence ID" value="BAD44502.1"/>
    <property type="molecule type" value="mRNA"/>
</dbReference>
<dbReference type="EMBL" id="AK176829">
    <property type="protein sequence ID" value="BAD44592.1"/>
    <property type="molecule type" value="mRNA"/>
</dbReference>
<dbReference type="EMBL" id="AK230354">
    <property type="protein sequence ID" value="BAF02153.1"/>
    <property type="molecule type" value="mRNA"/>
</dbReference>
<dbReference type="EMBL" id="AY087069">
    <property type="protein sequence ID" value="AAM64630.1"/>
    <property type="status" value="ALT_INIT"/>
    <property type="molecule type" value="mRNA"/>
</dbReference>
<dbReference type="PIR" id="E85363">
    <property type="entry name" value="E85363"/>
</dbReference>
<dbReference type="RefSeq" id="NP_567865.1">
    <molecule id="Q8RXP7-1"/>
    <property type="nucleotide sequence ID" value="NM_119254.3"/>
</dbReference>
<dbReference type="SMR" id="Q8RXP7"/>
<dbReference type="FunCoup" id="Q8RXP7">
    <property type="interactions" value="1505"/>
</dbReference>
<dbReference type="STRING" id="3702.Q8RXP7"/>
<dbReference type="PaxDb" id="3702-AT4G31040.1"/>
<dbReference type="ProteomicsDB" id="177216"/>
<dbReference type="EnsemblPlants" id="AT4G31040.1">
    <molecule id="Q8RXP7-1"/>
    <property type="protein sequence ID" value="AT4G31040.1"/>
    <property type="gene ID" value="AT4G31040"/>
</dbReference>
<dbReference type="GeneID" id="829231"/>
<dbReference type="Gramene" id="AT4G31040.1">
    <molecule id="Q8RXP7-1"/>
    <property type="protein sequence ID" value="AT4G31040.1"/>
    <property type="gene ID" value="AT4G31040"/>
</dbReference>
<dbReference type="KEGG" id="ath:AT4G31040"/>
<dbReference type="Araport" id="AT4G31040"/>
<dbReference type="TAIR" id="AT4G31040">
    <property type="gene designation" value="DLDG1"/>
</dbReference>
<dbReference type="eggNOG" id="ENOG502QR9Y">
    <property type="taxonomic scope" value="Eukaryota"/>
</dbReference>
<dbReference type="HOGENOM" id="CLU_038019_0_0_1"/>
<dbReference type="OMA" id="WCEDEID"/>
<dbReference type="PRO" id="PR:Q8RXP7"/>
<dbReference type="Proteomes" id="UP000006548">
    <property type="component" value="Chromosome 4"/>
</dbReference>
<dbReference type="ExpressionAtlas" id="Q8RXP7">
    <property type="expression patterns" value="baseline and differential"/>
</dbReference>
<dbReference type="GO" id="GO:0009941">
    <property type="term" value="C:chloroplast envelope"/>
    <property type="evidence" value="ECO:0000314"/>
    <property type="project" value="UniProtKB"/>
</dbReference>
<dbReference type="GO" id="GO:0031969">
    <property type="term" value="C:chloroplast membrane"/>
    <property type="evidence" value="ECO:0000314"/>
    <property type="project" value="TAIR"/>
</dbReference>
<dbReference type="GO" id="GO:0015386">
    <property type="term" value="F:potassium:proton antiporter activity"/>
    <property type="evidence" value="ECO:0000314"/>
    <property type="project" value="UniProtKB"/>
</dbReference>
<dbReference type="GO" id="GO:0010196">
    <property type="term" value="P:nonphotochemical quenching"/>
    <property type="evidence" value="ECO:0000315"/>
    <property type="project" value="TAIR"/>
</dbReference>
<dbReference type="GO" id="GO:0071805">
    <property type="term" value="P:potassium ion transmembrane transport"/>
    <property type="evidence" value="ECO:0000314"/>
    <property type="project" value="UniProtKB"/>
</dbReference>
<dbReference type="GO" id="GO:1902600">
    <property type="term" value="P:proton transmembrane transport"/>
    <property type="evidence" value="ECO:0000314"/>
    <property type="project" value="TAIR"/>
</dbReference>
<dbReference type="GO" id="GO:0051453">
    <property type="term" value="P:regulation of intracellular pH"/>
    <property type="evidence" value="ECO:0000314"/>
    <property type="project" value="UniProtKB"/>
</dbReference>
<dbReference type="InterPro" id="IPR004282">
    <property type="entry name" value="CemA"/>
</dbReference>
<dbReference type="PANTHER" id="PTHR33650:SF1">
    <property type="entry name" value="CHLOROPLAST ENVELOPE MEMBRANE PROTEIN"/>
    <property type="match status" value="1"/>
</dbReference>
<dbReference type="PANTHER" id="PTHR33650">
    <property type="entry name" value="CHLOROPLAST ENVELOPE MEMBRANE PROTEIN-RELATED"/>
    <property type="match status" value="1"/>
</dbReference>
<dbReference type="Pfam" id="PF03040">
    <property type="entry name" value="CemA"/>
    <property type="match status" value="1"/>
</dbReference>
<name>DLDG1_ARATH</name>
<keyword id="KW-0025">Alternative splicing</keyword>
<keyword id="KW-0050">Antiport</keyword>
<keyword id="KW-0150">Chloroplast</keyword>
<keyword id="KW-0375">Hydrogen ion transport</keyword>
<keyword id="KW-0406">Ion transport</keyword>
<keyword id="KW-0472">Membrane</keyword>
<keyword id="KW-0934">Plastid</keyword>
<keyword id="KW-0630">Potassium</keyword>
<keyword id="KW-0633">Potassium transport</keyword>
<keyword id="KW-1185">Reference proteome</keyword>
<keyword id="KW-0809">Transit peptide</keyword>
<keyword id="KW-0812">Transmembrane</keyword>
<keyword id="KW-1133">Transmembrane helix</keyword>
<keyword id="KW-0813">Transport</keyword>
<feature type="transit peptide" description="Chloroplast" evidence="1">
    <location>
        <begin position="1"/>
        <end position="54"/>
    </location>
</feature>
<feature type="chain" id="PRO_0000459557" description="Protein DAY-LENGTH-DEPENDENT DELAYED-GREENING 1, chloroplastic">
    <location>
        <begin position="55"/>
        <end position="438"/>
    </location>
</feature>
<feature type="transmembrane region" description="Helical" evidence="1">
    <location>
        <begin position="216"/>
        <end position="236"/>
    </location>
</feature>
<feature type="transmembrane region" description="Helical" evidence="1">
    <location>
        <begin position="314"/>
        <end position="334"/>
    </location>
</feature>
<feature type="transmembrane region" description="Helical" evidence="1">
    <location>
        <begin position="359"/>
        <end position="379"/>
    </location>
</feature>
<feature type="transmembrane region" description="Helical" evidence="1">
    <location>
        <begin position="398"/>
        <end position="418"/>
    </location>
</feature>
<feature type="splice variant" id="VSP_062213" description="In isoform 2.">
    <original>GKALELRDE</original>
    <variation>VWNCVMSGD</variation>
    <location>
        <begin position="298"/>
        <end position="306"/>
    </location>
</feature>
<feature type="splice variant" id="VSP_062214" description="In isoform 2.">
    <location>
        <begin position="307"/>
        <end position="438"/>
    </location>
</feature>
<feature type="sequence conflict" description="In Ref. 4; BAD43985." evidence="5" ref="4">
    <original>T</original>
    <variation>A</variation>
    <location>
        <position position="63"/>
    </location>
</feature>
<feature type="sequence conflict" description="In Ref. 4; BAD44317." evidence="5" ref="4">
    <original>N</original>
    <variation>D</variation>
    <location>
        <position position="67"/>
    </location>
</feature>
<feature type="sequence conflict" description="In Ref. 5; AAM64630." evidence="5" ref="5">
    <original>E</original>
    <variation>K</variation>
    <location>
        <position position="110"/>
    </location>
</feature>
<feature type="sequence conflict" description="In Ref. 4; BAD44262." evidence="5" ref="4">
    <original>T</original>
    <variation>A</variation>
    <location>
        <position position="345"/>
    </location>
</feature>
<protein>
    <recommendedName>
        <fullName evidence="4">Protein DAY-LENGTH-DEPENDENT DELAYED-GREENING 1, chloroplastic</fullName>
    </recommendedName>
    <alternativeName>
        <fullName evidence="6">Potassium/proton antiporter DLDG1</fullName>
    </alternativeName>
</protein>
<accession>Q8RXP7</accession>
<accession>O65546</accession>
<accession>Q67YB4</accession>
<accession>Q67YG9</accession>
<accession>Q67Z96</accession>
<accession>Q681Z5</accession>
<accession>Q8LBP9</accession>
<sequence length="438" mass="51021">MSLMSSSMVLCHCLSFSSQNPDPESSSSSLLRYKPCDSISLWGKRRKKLWRFVPSAEKNNSHTGNNNKRRRSWWQRFFFDDDGNWLGLRDDDIVDETTELAKDDEMSDEEKFETWKRRAEAIVELREGQEEIGDSGVVADVTKKWEDWIVDSDDSFVESWTRDSAGSDDNLELDELTIPDGGLVKMVRDMVLGAEEEDILYEDRIFRYASSKSAKFLAVLILIPWALDFLAHDYLLMPFLDRYVKTVPLAAQTLDVRRNQKLEMVKELNREKARYRLEVEIGKSPPLSDDDLWWEMRGKALELRDEWRLENRKAFANIWSDMVFGISLFVLLYANQGRVALLKFTGYKIINNISDTGKAFLIILITDIFLGYHSESGWETLLEIIMEHYGLEVEQSTITIFICLVPVIMDACVKLWLFKFLPRLSPRVSNIFQEMKRH</sequence>
<proteinExistence type="evidence at transcript level"/>
<comment type="function">
    <text evidence="2 3">Promotes K(+)/H(+) antiport activity supporting K(+) efflux to control H(+) homeostasis in chloroplasts (PubMed:31665522). Also able to ensure Ca(2+)/H(+) antiport activity in vitro (PubMed:31665522). Essential for chloroplast pH regulation and optimization of non-photochemical quenching (NPQ), a regulatory mechanism that dissipates excess light energy; acts downstream of PSBS but independently from PGR5 and FLAP1 (PubMed:31665522, PubMed:37339934).</text>
</comment>
<comment type="catalytic activity">
    <reaction evidence="2">
        <text>K(+)(in) + H(+)(out) = K(+)(out) + H(+)(in)</text>
        <dbReference type="Rhea" id="RHEA:29467"/>
        <dbReference type="ChEBI" id="CHEBI:15378"/>
        <dbReference type="ChEBI" id="CHEBI:29103"/>
    </reaction>
</comment>
<comment type="catalytic activity">
    <reaction evidence="2">
        <text>Ca(2+)(in) + H(+)(out) = Ca(2+)(out) + H(+)(in)</text>
        <dbReference type="Rhea" id="RHEA:71799"/>
        <dbReference type="ChEBI" id="CHEBI:15378"/>
        <dbReference type="ChEBI" id="CHEBI:29108"/>
    </reaction>
</comment>
<comment type="subcellular location">
    <subcellularLocation>
        <location evidence="2">Plastid</location>
        <location evidence="2">Chloroplast envelope</location>
    </subcellularLocation>
    <subcellularLocation>
        <location evidence="2">Plastid</location>
        <location evidence="2">Chloroplast membrane</location>
        <topology evidence="1">Multi-pass membrane protein</topology>
    </subcellularLocation>
</comment>
<comment type="alternative products">
    <event type="alternative splicing"/>
    <isoform>
        <id>Q8RXP7-1</id>
        <name>1</name>
        <sequence type="displayed"/>
    </isoform>
    <isoform>
        <id>Q8RXP7-2</id>
        <name>2</name>
        <sequence type="described" ref="VSP_062213 VSP_062214"/>
    </isoform>
</comment>
<comment type="disruption phenotype">
    <text evidence="2 3">Pale-green phenotype in developing leaves with reduced chloroplast size, specifically under continuous light but not in the dark or in short-day, and associated with non-photochemical quenching (NPQ) (PubMed:31665522). The double mutant missing DLDG1 and FLAP1 (dldg1 flap1) has a pale-green phenotype similar to the dldlg1 simple mutant in continuous light, but a lighter pale-green aspect in fluctuating light and higher NPQ than in flap1 single mutant under short-day condition (PubMed:37339934). The double mutant missing DLDG1 and PsbS/NPQ4 (dldg1 npq4) has a pale-green phenotype similar to the dldlg1 simple mutant in continuous light, and an identically reduced NPQ induction as in the npq4 single mutant (PubMed:37339934). The double mutant missing DLDG1 and PGR5 (dldg1 pgr5) has a pale-green phenotype similar to the dldlg1 simple mutant in continuous light, and a partial compensation of the growth impairment of pgr5 simple mutant under fluctuating-light conditions; higher NPQ than in pgr5 but lower NPQ than in dldg1 (PubMed:37339934).</text>
</comment>
<comment type="similarity">
    <text evidence="5">Belongs to the CemA family.</text>
</comment>
<comment type="sequence caution" evidence="5">
    <conflict type="erroneous initiation">
        <sequence resource="EMBL-CDS" id="AAM64630"/>
    </conflict>
    <text>Truncated N-terminus.</text>
</comment>
<comment type="sequence caution" evidence="5">
    <conflict type="erroneous gene model prediction">
        <sequence resource="EMBL-CDS" id="CAA18189"/>
    </conflict>
</comment>
<comment type="sequence caution" evidence="5">
    <conflict type="erroneous gene model prediction">
        <sequence resource="EMBL-CDS" id="CAB79822"/>
    </conflict>
</comment>
<evidence type="ECO:0000255" key="1"/>
<evidence type="ECO:0000269" key="2">
    <source>
    </source>
</evidence>
<evidence type="ECO:0000269" key="3">
    <source>
    </source>
</evidence>
<evidence type="ECO:0000303" key="4">
    <source>
    </source>
</evidence>
<evidence type="ECO:0000305" key="5"/>
<evidence type="ECO:0000305" key="6">
    <source>
    </source>
</evidence>
<evidence type="ECO:0000312" key="7">
    <source>
        <dbReference type="Araport" id="AT4G31040"/>
    </source>
</evidence>
<evidence type="ECO:0000312" key="8">
    <source>
        <dbReference type="EMBL" id="CAA18189.1"/>
    </source>
</evidence>
<organism>
    <name type="scientific">Arabidopsis thaliana</name>
    <name type="common">Mouse-ear cress</name>
    <dbReference type="NCBI Taxonomy" id="3702"/>
    <lineage>
        <taxon>Eukaryota</taxon>
        <taxon>Viridiplantae</taxon>
        <taxon>Streptophyta</taxon>
        <taxon>Embryophyta</taxon>
        <taxon>Tracheophyta</taxon>
        <taxon>Spermatophyta</taxon>
        <taxon>Magnoliopsida</taxon>
        <taxon>eudicotyledons</taxon>
        <taxon>Gunneridae</taxon>
        <taxon>Pentapetalae</taxon>
        <taxon>rosids</taxon>
        <taxon>malvids</taxon>
        <taxon>Brassicales</taxon>
        <taxon>Brassicaceae</taxon>
        <taxon>Camelineae</taxon>
        <taxon>Arabidopsis</taxon>
    </lineage>
</organism>
<gene>
    <name evidence="4" type="primary">DLDG1</name>
    <name evidence="5" type="synonym">At4g31041</name>
    <name evidence="7" type="ordered locus">At4g31040</name>
    <name evidence="8" type="ORF">F6I18.50</name>
</gene>